<organism>
    <name type="scientific">Trypanosoma brucei brucei</name>
    <dbReference type="NCBI Taxonomy" id="5702"/>
    <lineage>
        <taxon>Eukaryota</taxon>
        <taxon>Discoba</taxon>
        <taxon>Euglenozoa</taxon>
        <taxon>Kinetoplastea</taxon>
        <taxon>Metakinetoplastina</taxon>
        <taxon>Trypanosomatida</taxon>
        <taxon>Trypanosomatidae</taxon>
        <taxon>Trypanosoma</taxon>
    </lineage>
</organism>
<comment type="function">
    <text>Essential for the control of the cell cycle at the G2/M (mitosis) transition.</text>
</comment>
<comment type="similarity">
    <text evidence="1">Belongs to the cyclin family. Cyclin AB subfamily.</text>
</comment>
<proteinExistence type="evidence at transcript level"/>
<keyword id="KW-0131">Cell cycle</keyword>
<keyword id="KW-0132">Cell division</keyword>
<keyword id="KW-0195">Cyclin</keyword>
<keyword id="KW-0498">Mitosis</keyword>
<sequence>MMTNLNVRTIKGCFPGSLPDALNDMSVINHILSLTGRFDEGQAALASTVNVVYVGTAVYDIPRYREEYTKNFIARGCGISEVCVAEARSTGATPCAAATMVTPDQLQHLAEAHIILLPEVTPFSLYDAGRKRASMRVSGQVAARGVVLVGGGCCFRAEHSDSANPKTCAQYMLSRENEVDSGRPVEMEEGGAKWEYLCVHGLSVLPGIFCPQHSSRDATGLLLNESFSKMLKRHPTERGIGVDCRAVLLLMGDGRYQVLTIANREGRTASVKDINIQIKDVVEGNVQTTTIQQQGSVEELLRKPCGPVVRDPFEAYYAMANPTALTEKLLCAPR</sequence>
<evidence type="ECO:0000305" key="1"/>
<reference key="1">
    <citation type="journal article" date="1993" name="Gene">
        <title>Isolation of a mitotic-like cyclin homologue from the protozoan Trypanosoma brucei.</title>
        <authorList>
            <person name="Affranchino J.L."/>
            <person name="Gonzalez S.A."/>
            <person name="Pays E."/>
        </authorList>
    </citation>
    <scope>NUCLEOTIDE SEQUENCE [MRNA]</scope>
    <source>
        <strain>EATRO 1125</strain>
    </source>
</reference>
<protein>
    <recommendedName>
        <fullName>G2/mitotic-specific cyclin-1</fullName>
    </recommendedName>
</protein>
<dbReference type="EMBL" id="X65625">
    <property type="protein sequence ID" value="CAA46579.1"/>
    <property type="molecule type" value="mRNA"/>
</dbReference>
<dbReference type="PIR" id="JN0844">
    <property type="entry name" value="JN0844"/>
</dbReference>
<dbReference type="SMR" id="P41179"/>
<dbReference type="GO" id="GO:0051301">
    <property type="term" value="P:cell division"/>
    <property type="evidence" value="ECO:0007669"/>
    <property type="project" value="UniProtKB-KW"/>
</dbReference>
<dbReference type="FunFam" id="3.40.50.880:FF:000093">
    <property type="entry name" value="Cyclin 1, putative"/>
    <property type="match status" value="1"/>
</dbReference>
<dbReference type="Gene3D" id="3.40.50.880">
    <property type="match status" value="1"/>
</dbReference>
<dbReference type="InterPro" id="IPR029062">
    <property type="entry name" value="Class_I_gatase-like"/>
</dbReference>
<dbReference type="PANTHER" id="PTHR20842:SF0">
    <property type="entry name" value="ALPHA-ASPARTYL DIPEPTIDASE"/>
    <property type="match status" value="1"/>
</dbReference>
<dbReference type="PANTHER" id="PTHR20842">
    <property type="entry name" value="PROTEASE S51 ALPHA-ASPARTYL DIPEPTIDASE"/>
    <property type="match status" value="1"/>
</dbReference>
<feature type="chain" id="PRO_0000080399" description="G2/mitotic-specific cyclin-1">
    <location>
        <begin position="1"/>
        <end position="334"/>
    </location>
</feature>
<gene>
    <name type="primary">CYC1</name>
</gene>
<name>CCN1_TRYBB</name>
<accession>P41179</accession>